<reference key="1">
    <citation type="journal article" date="2011" name="J. Bacteriol.">
        <title>Genome sequence of lineage III Listeria monocytogenes strain HCC23.</title>
        <authorList>
            <person name="Steele C.L."/>
            <person name="Donaldson J.R."/>
            <person name="Paul D."/>
            <person name="Banes M.M."/>
            <person name="Arick T."/>
            <person name="Bridges S.M."/>
            <person name="Lawrence M.L."/>
        </authorList>
    </citation>
    <scope>NUCLEOTIDE SEQUENCE [LARGE SCALE GENOMIC DNA]</scope>
    <source>
        <strain>HCC23</strain>
    </source>
</reference>
<keyword id="KW-1003">Cell membrane</keyword>
<keyword id="KW-0472">Membrane</keyword>
<keyword id="KW-0812">Transmembrane</keyword>
<keyword id="KW-1133">Transmembrane helix</keyword>
<evidence type="ECO:0000255" key="1">
    <source>
        <dbReference type="HAMAP-Rule" id="MF_01536"/>
    </source>
</evidence>
<feature type="chain" id="PRO_1000185190" description="UPF0344 protein LMHCC_0278">
    <location>
        <begin position="1"/>
        <end position="120"/>
    </location>
</feature>
<feature type="transmembrane region" description="Helical" evidence="1">
    <location>
        <begin position="3"/>
        <end position="23"/>
    </location>
</feature>
<feature type="transmembrane region" description="Helical" evidence="1">
    <location>
        <begin position="33"/>
        <end position="53"/>
    </location>
</feature>
<feature type="transmembrane region" description="Helical" evidence="1">
    <location>
        <begin position="62"/>
        <end position="82"/>
    </location>
</feature>
<feature type="transmembrane region" description="Helical" evidence="1">
    <location>
        <begin position="92"/>
        <end position="112"/>
    </location>
</feature>
<accession>B8DF46</accession>
<organism>
    <name type="scientific">Listeria monocytogenes serotype 4a (strain HCC23)</name>
    <dbReference type="NCBI Taxonomy" id="552536"/>
    <lineage>
        <taxon>Bacteria</taxon>
        <taxon>Bacillati</taxon>
        <taxon>Bacillota</taxon>
        <taxon>Bacilli</taxon>
        <taxon>Bacillales</taxon>
        <taxon>Listeriaceae</taxon>
        <taxon>Listeria</taxon>
    </lineage>
</organism>
<proteinExistence type="inferred from homology"/>
<dbReference type="EMBL" id="CP001175">
    <property type="protein sequence ID" value="ACK38638.1"/>
    <property type="molecule type" value="Genomic_DNA"/>
</dbReference>
<dbReference type="RefSeq" id="WP_012580847.1">
    <property type="nucleotide sequence ID" value="NC_011660.1"/>
</dbReference>
<dbReference type="KEGG" id="lmh:LMHCC_0278"/>
<dbReference type="HOGENOM" id="CLU_146641_1_1_9"/>
<dbReference type="GO" id="GO:0005886">
    <property type="term" value="C:plasma membrane"/>
    <property type="evidence" value="ECO:0007669"/>
    <property type="project" value="UniProtKB-SubCell"/>
</dbReference>
<dbReference type="HAMAP" id="MF_01536">
    <property type="entry name" value="UPF0344"/>
    <property type="match status" value="1"/>
</dbReference>
<dbReference type="InterPro" id="IPR010899">
    <property type="entry name" value="UPF0344"/>
</dbReference>
<dbReference type="NCBIfam" id="NF010197">
    <property type="entry name" value="PRK13673.1-4"/>
    <property type="match status" value="1"/>
</dbReference>
<dbReference type="Pfam" id="PF07457">
    <property type="entry name" value="DUF1516"/>
    <property type="match status" value="1"/>
</dbReference>
<gene>
    <name type="ordered locus">LMHCC_0278</name>
</gene>
<comment type="subcellular location">
    <subcellularLocation>
        <location evidence="1">Cell membrane</location>
        <topology evidence="1">Multi-pass membrane protein</topology>
    </subcellularLocation>
</comment>
<comment type="similarity">
    <text evidence="1">Belongs to the UPF0344 family.</text>
</comment>
<protein>
    <recommendedName>
        <fullName evidence="1">UPF0344 protein LMHCC_0278</fullName>
    </recommendedName>
</protein>
<sequence length="120" mass="13722">MWGYIHLISWVAIVVLTVTALLIYSKSVKSFTMLQMINRVFYILVILSGIMMVKYSIEQSWILAIFKILMGIIVIGVVEMLLSYRKQQKPTGMFLMIFVIVVVITISLGFYLSGGYPLFN</sequence>
<name>Y278_LISMH</name>